<feature type="chain" id="PRO_0000197868" description="Exodeoxyribonuclease 7 large subunit">
    <location>
        <begin position="1"/>
        <end position="459"/>
    </location>
</feature>
<organism>
    <name type="scientific">Pseudomonas syringae pv. tomato (strain ATCC BAA-871 / DC3000)</name>
    <dbReference type="NCBI Taxonomy" id="223283"/>
    <lineage>
        <taxon>Bacteria</taxon>
        <taxon>Pseudomonadati</taxon>
        <taxon>Pseudomonadota</taxon>
        <taxon>Gammaproteobacteria</taxon>
        <taxon>Pseudomonadales</taxon>
        <taxon>Pseudomonadaceae</taxon>
        <taxon>Pseudomonas</taxon>
    </lineage>
</organism>
<comment type="function">
    <text evidence="1">Bidirectionally degrades single-stranded DNA into large acid-insoluble oligonucleotides, which are then degraded further into small acid-soluble oligonucleotides.</text>
</comment>
<comment type="catalytic activity">
    <reaction evidence="1">
        <text>Exonucleolytic cleavage in either 5'- to 3'- or 3'- to 5'-direction to yield nucleoside 5'-phosphates.</text>
        <dbReference type="EC" id="3.1.11.6"/>
    </reaction>
</comment>
<comment type="subunit">
    <text evidence="1">Heterooligomer composed of large and small subunits.</text>
</comment>
<comment type="subcellular location">
    <subcellularLocation>
        <location evidence="1">Cytoplasm</location>
    </subcellularLocation>
</comment>
<comment type="similarity">
    <text evidence="1">Belongs to the XseA family.</text>
</comment>
<comment type="sequence caution" evidence="2">
    <conflict type="erroneous initiation">
        <sequence resource="EMBL-CDS" id="AAO54967"/>
    </conflict>
</comment>
<protein>
    <recommendedName>
        <fullName evidence="1">Exodeoxyribonuclease 7 large subunit</fullName>
        <ecNumber evidence="1">3.1.11.6</ecNumber>
    </recommendedName>
    <alternativeName>
        <fullName evidence="1">Exodeoxyribonuclease VII large subunit</fullName>
        <shortName evidence="1">Exonuclease VII large subunit</shortName>
    </alternativeName>
</protein>
<proteinExistence type="inferred from homology"/>
<reference key="1">
    <citation type="journal article" date="2003" name="Proc. Natl. Acad. Sci. U.S.A.">
        <title>The complete genome sequence of the Arabidopsis and tomato pathogen Pseudomonas syringae pv. tomato DC3000.</title>
        <authorList>
            <person name="Buell C.R."/>
            <person name="Joardar V."/>
            <person name="Lindeberg M."/>
            <person name="Selengut J."/>
            <person name="Paulsen I.T."/>
            <person name="Gwinn M.L."/>
            <person name="Dodson R.J."/>
            <person name="DeBoy R.T."/>
            <person name="Durkin A.S."/>
            <person name="Kolonay J.F."/>
            <person name="Madupu R."/>
            <person name="Daugherty S.C."/>
            <person name="Brinkac L.M."/>
            <person name="Beanan M.J."/>
            <person name="Haft D.H."/>
            <person name="Nelson W.C."/>
            <person name="Davidsen T.M."/>
            <person name="Zafar N."/>
            <person name="Zhou L."/>
            <person name="Liu J."/>
            <person name="Yuan Q."/>
            <person name="Khouri H.M."/>
            <person name="Fedorova N.B."/>
            <person name="Tran B."/>
            <person name="Russell D."/>
            <person name="Berry K.J."/>
            <person name="Utterback T.R."/>
            <person name="Van Aken S.E."/>
            <person name="Feldblyum T.V."/>
            <person name="D'Ascenzo M."/>
            <person name="Deng W.-L."/>
            <person name="Ramos A.R."/>
            <person name="Alfano J.R."/>
            <person name="Cartinhour S."/>
            <person name="Chatterjee A.K."/>
            <person name="Delaney T.P."/>
            <person name="Lazarowitz S.G."/>
            <person name="Martin G.B."/>
            <person name="Schneider D.J."/>
            <person name="Tang X."/>
            <person name="Bender C.L."/>
            <person name="White O."/>
            <person name="Fraser C.M."/>
            <person name="Collmer A."/>
        </authorList>
    </citation>
    <scope>NUCLEOTIDE SEQUENCE [LARGE SCALE GENOMIC DNA]</scope>
    <source>
        <strain>ATCC BAA-871 / DC3000</strain>
    </source>
</reference>
<dbReference type="EC" id="3.1.11.6" evidence="1"/>
<dbReference type="EMBL" id="AE016853">
    <property type="protein sequence ID" value="AAO54967.1"/>
    <property type="status" value="ALT_INIT"/>
    <property type="molecule type" value="Genomic_DNA"/>
</dbReference>
<dbReference type="RefSeq" id="NP_791272.1">
    <property type="nucleotide sequence ID" value="NC_004578.1"/>
</dbReference>
<dbReference type="RefSeq" id="WP_161797807.1">
    <property type="nucleotide sequence ID" value="NC_004578.1"/>
</dbReference>
<dbReference type="SMR" id="Q886X9"/>
<dbReference type="STRING" id="223283.PSPTO_1446"/>
<dbReference type="GeneID" id="1183083"/>
<dbReference type="KEGG" id="pst:PSPTO_1446"/>
<dbReference type="PATRIC" id="fig|223283.9.peg.1466"/>
<dbReference type="eggNOG" id="COG1570">
    <property type="taxonomic scope" value="Bacteria"/>
</dbReference>
<dbReference type="HOGENOM" id="CLU_023625_3_1_6"/>
<dbReference type="OrthoDB" id="9802795at2"/>
<dbReference type="Proteomes" id="UP000002515">
    <property type="component" value="Chromosome"/>
</dbReference>
<dbReference type="GO" id="GO:0005737">
    <property type="term" value="C:cytoplasm"/>
    <property type="evidence" value="ECO:0007669"/>
    <property type="project" value="UniProtKB-SubCell"/>
</dbReference>
<dbReference type="GO" id="GO:0009318">
    <property type="term" value="C:exodeoxyribonuclease VII complex"/>
    <property type="evidence" value="ECO:0007669"/>
    <property type="project" value="InterPro"/>
</dbReference>
<dbReference type="GO" id="GO:0008855">
    <property type="term" value="F:exodeoxyribonuclease VII activity"/>
    <property type="evidence" value="ECO:0007669"/>
    <property type="project" value="UniProtKB-UniRule"/>
</dbReference>
<dbReference type="GO" id="GO:0003676">
    <property type="term" value="F:nucleic acid binding"/>
    <property type="evidence" value="ECO:0007669"/>
    <property type="project" value="InterPro"/>
</dbReference>
<dbReference type="GO" id="GO:0006308">
    <property type="term" value="P:DNA catabolic process"/>
    <property type="evidence" value="ECO:0007669"/>
    <property type="project" value="UniProtKB-UniRule"/>
</dbReference>
<dbReference type="CDD" id="cd04489">
    <property type="entry name" value="ExoVII_LU_OBF"/>
    <property type="match status" value="1"/>
</dbReference>
<dbReference type="Gene3D" id="2.40.50.1010">
    <property type="match status" value="1"/>
</dbReference>
<dbReference type="HAMAP" id="MF_00378">
    <property type="entry name" value="Exonuc_7_L"/>
    <property type="match status" value="1"/>
</dbReference>
<dbReference type="InterPro" id="IPR003753">
    <property type="entry name" value="Exonuc_VII_L"/>
</dbReference>
<dbReference type="InterPro" id="IPR020579">
    <property type="entry name" value="Exonuc_VII_lsu_C"/>
</dbReference>
<dbReference type="InterPro" id="IPR025824">
    <property type="entry name" value="OB-fold_nuc-bd_dom"/>
</dbReference>
<dbReference type="NCBIfam" id="TIGR00237">
    <property type="entry name" value="xseA"/>
    <property type="match status" value="1"/>
</dbReference>
<dbReference type="PANTHER" id="PTHR30008">
    <property type="entry name" value="EXODEOXYRIBONUCLEASE 7 LARGE SUBUNIT"/>
    <property type="match status" value="1"/>
</dbReference>
<dbReference type="PANTHER" id="PTHR30008:SF0">
    <property type="entry name" value="EXODEOXYRIBONUCLEASE 7 LARGE SUBUNIT"/>
    <property type="match status" value="1"/>
</dbReference>
<dbReference type="Pfam" id="PF02601">
    <property type="entry name" value="Exonuc_VII_L"/>
    <property type="match status" value="1"/>
</dbReference>
<dbReference type="Pfam" id="PF13742">
    <property type="entry name" value="tRNA_anti_2"/>
    <property type="match status" value="1"/>
</dbReference>
<sequence length="459" mass="51243">MIKDPFARLGLDREVLTVSQLNGRARVLLEDVFSSIWVEGEISNLSRPASGHVYFTLKDSGAQVRCALFRQSAARVRQALKDGLQVKVRGKVSLFEGRGDYQLILDTVEPAGDGALRLAFDALKAKLSDEGLFSADRKVALPLHPQRIGIISSPTGAVIRDIISVFRRRAPRVELTLIPTAVQGREAINQIVRALKLADARGFDALILARGGGSLEDLWCFNEEAVARAIDACVTPIVSAVGHETDVSISDFVADVRAPTPSAAAELLAPDSSDLHRRVDNLHRRLVSRMQDRLMRERLRLEGISRRLRHPGERLRQQSQRLDDLDMRLRRAFEQSMHKKQVRLAHMESRLTAQHPGRTLAFLRQRLDALAERLPRAIREQIKVRKLQLQSQMQTLNVVSPLATLGRGYSILLDERGHAIRNAAQTQPGQRLTARLGEGELQVRVEDNHLTPVTLSLLD</sequence>
<accession>Q886X9</accession>
<name>EX7L_PSESM</name>
<keyword id="KW-0963">Cytoplasm</keyword>
<keyword id="KW-0269">Exonuclease</keyword>
<keyword id="KW-0378">Hydrolase</keyword>
<keyword id="KW-0540">Nuclease</keyword>
<keyword id="KW-1185">Reference proteome</keyword>
<gene>
    <name evidence="1" type="primary">xseA</name>
    <name type="ordered locus">PSPTO_1446</name>
</gene>
<evidence type="ECO:0000255" key="1">
    <source>
        <dbReference type="HAMAP-Rule" id="MF_00378"/>
    </source>
</evidence>
<evidence type="ECO:0000305" key="2"/>